<keyword id="KW-0004">4Fe-4S</keyword>
<keyword id="KW-0963">Cytoplasm</keyword>
<keyword id="KW-1015">Disulfide bond</keyword>
<keyword id="KW-0408">Iron</keyword>
<keyword id="KW-0411">Iron-sulfur</keyword>
<keyword id="KW-0479">Metal-binding</keyword>
<keyword id="KW-0489">Methyltransferase</keyword>
<keyword id="KW-0698">rRNA processing</keyword>
<keyword id="KW-0949">S-adenosyl-L-methionine</keyword>
<keyword id="KW-0808">Transferase</keyword>
<keyword id="KW-0819">tRNA processing</keyword>
<evidence type="ECO:0000255" key="1">
    <source>
        <dbReference type="HAMAP-Rule" id="MF_01849"/>
    </source>
</evidence>
<evidence type="ECO:0000255" key="2">
    <source>
        <dbReference type="PROSITE-ProRule" id="PRU01266"/>
    </source>
</evidence>
<comment type="function">
    <text evidence="1">Specifically methylates position 2 of adenine 2503 in 23S rRNA and position 2 of adenine 37 in tRNAs. m2A2503 modification seems to play a crucial role in the proofreading step occurring at the peptidyl transferase center and thus would serve to optimize ribosomal fidelity.</text>
</comment>
<comment type="catalytic activity">
    <reaction evidence="1">
        <text>adenosine(2503) in 23S rRNA + 2 reduced [2Fe-2S]-[ferredoxin] + 2 S-adenosyl-L-methionine = 2-methyladenosine(2503) in 23S rRNA + 5'-deoxyadenosine + L-methionine + 2 oxidized [2Fe-2S]-[ferredoxin] + S-adenosyl-L-homocysteine</text>
        <dbReference type="Rhea" id="RHEA:42916"/>
        <dbReference type="Rhea" id="RHEA-COMP:10000"/>
        <dbReference type="Rhea" id="RHEA-COMP:10001"/>
        <dbReference type="Rhea" id="RHEA-COMP:10152"/>
        <dbReference type="Rhea" id="RHEA-COMP:10282"/>
        <dbReference type="ChEBI" id="CHEBI:17319"/>
        <dbReference type="ChEBI" id="CHEBI:33737"/>
        <dbReference type="ChEBI" id="CHEBI:33738"/>
        <dbReference type="ChEBI" id="CHEBI:57844"/>
        <dbReference type="ChEBI" id="CHEBI:57856"/>
        <dbReference type="ChEBI" id="CHEBI:59789"/>
        <dbReference type="ChEBI" id="CHEBI:74411"/>
        <dbReference type="ChEBI" id="CHEBI:74497"/>
        <dbReference type="EC" id="2.1.1.192"/>
    </reaction>
</comment>
<comment type="catalytic activity">
    <reaction evidence="1">
        <text>adenosine(37) in tRNA + 2 reduced [2Fe-2S]-[ferredoxin] + 2 S-adenosyl-L-methionine = 2-methyladenosine(37) in tRNA + 5'-deoxyadenosine + L-methionine + 2 oxidized [2Fe-2S]-[ferredoxin] + S-adenosyl-L-homocysteine</text>
        <dbReference type="Rhea" id="RHEA:43332"/>
        <dbReference type="Rhea" id="RHEA-COMP:10000"/>
        <dbReference type="Rhea" id="RHEA-COMP:10001"/>
        <dbReference type="Rhea" id="RHEA-COMP:10162"/>
        <dbReference type="Rhea" id="RHEA-COMP:10485"/>
        <dbReference type="ChEBI" id="CHEBI:17319"/>
        <dbReference type="ChEBI" id="CHEBI:33737"/>
        <dbReference type="ChEBI" id="CHEBI:33738"/>
        <dbReference type="ChEBI" id="CHEBI:57844"/>
        <dbReference type="ChEBI" id="CHEBI:57856"/>
        <dbReference type="ChEBI" id="CHEBI:59789"/>
        <dbReference type="ChEBI" id="CHEBI:74411"/>
        <dbReference type="ChEBI" id="CHEBI:74497"/>
        <dbReference type="EC" id="2.1.1.192"/>
    </reaction>
</comment>
<comment type="cofactor">
    <cofactor evidence="1">
        <name>[4Fe-4S] cluster</name>
        <dbReference type="ChEBI" id="CHEBI:49883"/>
    </cofactor>
    <text evidence="1">Binds 1 [4Fe-4S] cluster. The cluster is coordinated with 3 cysteines and an exchangeable S-adenosyl-L-methionine.</text>
</comment>
<comment type="subcellular location">
    <subcellularLocation>
        <location evidence="1">Cytoplasm</location>
    </subcellularLocation>
</comment>
<comment type="miscellaneous">
    <text evidence="1">Reaction proceeds by a ping-pong mechanism involving intermediate methylation of a conserved cysteine residue.</text>
</comment>
<comment type="similarity">
    <text evidence="1">Belongs to the radical SAM superfamily. RlmN family.</text>
</comment>
<dbReference type="EC" id="2.1.1.192" evidence="1"/>
<dbReference type="EMBL" id="CP000444">
    <property type="protein sequence ID" value="ABI42295.1"/>
    <property type="molecule type" value="Genomic_DNA"/>
</dbReference>
<dbReference type="SMR" id="Q0HX60"/>
<dbReference type="KEGG" id="shm:Shewmr7_1296"/>
<dbReference type="HOGENOM" id="CLU_029101_2_0_6"/>
<dbReference type="GO" id="GO:0005737">
    <property type="term" value="C:cytoplasm"/>
    <property type="evidence" value="ECO:0007669"/>
    <property type="project" value="UniProtKB-SubCell"/>
</dbReference>
<dbReference type="GO" id="GO:0051539">
    <property type="term" value="F:4 iron, 4 sulfur cluster binding"/>
    <property type="evidence" value="ECO:0007669"/>
    <property type="project" value="UniProtKB-UniRule"/>
</dbReference>
<dbReference type="GO" id="GO:0046872">
    <property type="term" value="F:metal ion binding"/>
    <property type="evidence" value="ECO:0007669"/>
    <property type="project" value="UniProtKB-KW"/>
</dbReference>
<dbReference type="GO" id="GO:0070040">
    <property type="term" value="F:rRNA (adenine(2503)-C2-)-methyltransferase activity"/>
    <property type="evidence" value="ECO:0007669"/>
    <property type="project" value="UniProtKB-UniRule"/>
</dbReference>
<dbReference type="GO" id="GO:0019843">
    <property type="term" value="F:rRNA binding"/>
    <property type="evidence" value="ECO:0007669"/>
    <property type="project" value="UniProtKB-UniRule"/>
</dbReference>
<dbReference type="GO" id="GO:0002935">
    <property type="term" value="F:tRNA (adenine(37)-C2)-methyltransferase activity"/>
    <property type="evidence" value="ECO:0007669"/>
    <property type="project" value="UniProtKB-UniRule"/>
</dbReference>
<dbReference type="GO" id="GO:0000049">
    <property type="term" value="F:tRNA binding"/>
    <property type="evidence" value="ECO:0007669"/>
    <property type="project" value="UniProtKB-UniRule"/>
</dbReference>
<dbReference type="GO" id="GO:0070475">
    <property type="term" value="P:rRNA base methylation"/>
    <property type="evidence" value="ECO:0007669"/>
    <property type="project" value="UniProtKB-UniRule"/>
</dbReference>
<dbReference type="GO" id="GO:0030488">
    <property type="term" value="P:tRNA methylation"/>
    <property type="evidence" value="ECO:0007669"/>
    <property type="project" value="UniProtKB-UniRule"/>
</dbReference>
<dbReference type="CDD" id="cd01335">
    <property type="entry name" value="Radical_SAM"/>
    <property type="match status" value="1"/>
</dbReference>
<dbReference type="FunFam" id="1.10.150.530:FF:000003">
    <property type="entry name" value="Dual-specificity RNA methyltransferase RlmN"/>
    <property type="match status" value="1"/>
</dbReference>
<dbReference type="FunFam" id="3.20.20.70:FF:000008">
    <property type="entry name" value="Dual-specificity RNA methyltransferase RlmN"/>
    <property type="match status" value="1"/>
</dbReference>
<dbReference type="Gene3D" id="1.10.150.530">
    <property type="match status" value="1"/>
</dbReference>
<dbReference type="Gene3D" id="3.20.20.70">
    <property type="entry name" value="Aldolase class I"/>
    <property type="match status" value="1"/>
</dbReference>
<dbReference type="HAMAP" id="MF_01849">
    <property type="entry name" value="RNA_methyltr_RlmN"/>
    <property type="match status" value="1"/>
</dbReference>
<dbReference type="InterPro" id="IPR013785">
    <property type="entry name" value="Aldolase_TIM"/>
</dbReference>
<dbReference type="InterPro" id="IPR040072">
    <property type="entry name" value="Methyltransferase_A"/>
</dbReference>
<dbReference type="InterPro" id="IPR048641">
    <property type="entry name" value="RlmN_N"/>
</dbReference>
<dbReference type="InterPro" id="IPR027492">
    <property type="entry name" value="RNA_MTrfase_RlmN"/>
</dbReference>
<dbReference type="InterPro" id="IPR004383">
    <property type="entry name" value="rRNA_lsu_MTrfase_RlmN/Cfr"/>
</dbReference>
<dbReference type="InterPro" id="IPR007197">
    <property type="entry name" value="rSAM"/>
</dbReference>
<dbReference type="NCBIfam" id="NF008396">
    <property type="entry name" value="PRK11194.1"/>
    <property type="match status" value="1"/>
</dbReference>
<dbReference type="NCBIfam" id="TIGR00048">
    <property type="entry name" value="rRNA_mod_RlmN"/>
    <property type="match status" value="1"/>
</dbReference>
<dbReference type="PANTHER" id="PTHR30544">
    <property type="entry name" value="23S RRNA METHYLTRANSFERASE"/>
    <property type="match status" value="1"/>
</dbReference>
<dbReference type="PANTHER" id="PTHR30544:SF5">
    <property type="entry name" value="RADICAL SAM CORE DOMAIN-CONTAINING PROTEIN"/>
    <property type="match status" value="1"/>
</dbReference>
<dbReference type="Pfam" id="PF04055">
    <property type="entry name" value="Radical_SAM"/>
    <property type="match status" value="1"/>
</dbReference>
<dbReference type="Pfam" id="PF21016">
    <property type="entry name" value="RlmN_N"/>
    <property type="match status" value="1"/>
</dbReference>
<dbReference type="PIRSF" id="PIRSF006004">
    <property type="entry name" value="CHP00048"/>
    <property type="match status" value="1"/>
</dbReference>
<dbReference type="SFLD" id="SFLDF00275">
    <property type="entry name" value="adenosine_C2_methyltransferase"/>
    <property type="match status" value="1"/>
</dbReference>
<dbReference type="SFLD" id="SFLDS00029">
    <property type="entry name" value="Radical_SAM"/>
    <property type="match status" value="1"/>
</dbReference>
<dbReference type="SUPFAM" id="SSF102114">
    <property type="entry name" value="Radical SAM enzymes"/>
    <property type="match status" value="1"/>
</dbReference>
<dbReference type="PROSITE" id="PS51918">
    <property type="entry name" value="RADICAL_SAM"/>
    <property type="match status" value="1"/>
</dbReference>
<proteinExistence type="inferred from homology"/>
<gene>
    <name evidence="1" type="primary">rlmN</name>
    <name type="ordered locus">Shewmr7_1296</name>
</gene>
<reference key="1">
    <citation type="submission" date="2006-08" db="EMBL/GenBank/DDBJ databases">
        <title>Complete sequence of chromosome 1 of Shewanella sp. MR-7.</title>
        <authorList>
            <person name="Copeland A."/>
            <person name="Lucas S."/>
            <person name="Lapidus A."/>
            <person name="Barry K."/>
            <person name="Detter J.C."/>
            <person name="Glavina del Rio T."/>
            <person name="Hammon N."/>
            <person name="Israni S."/>
            <person name="Dalin E."/>
            <person name="Tice H."/>
            <person name="Pitluck S."/>
            <person name="Kiss H."/>
            <person name="Brettin T."/>
            <person name="Bruce D."/>
            <person name="Han C."/>
            <person name="Tapia R."/>
            <person name="Gilna P."/>
            <person name="Schmutz J."/>
            <person name="Larimer F."/>
            <person name="Land M."/>
            <person name="Hauser L."/>
            <person name="Kyrpides N."/>
            <person name="Mikhailova N."/>
            <person name="Nealson K."/>
            <person name="Konstantinidis K."/>
            <person name="Klappenbach J."/>
            <person name="Tiedje J."/>
            <person name="Richardson P."/>
        </authorList>
    </citation>
    <scope>NUCLEOTIDE SEQUENCE [LARGE SCALE GENOMIC DNA]</scope>
    <source>
        <strain>MR-7</strain>
    </source>
</reference>
<name>RLMN_SHESR</name>
<feature type="chain" id="PRO_0000350406" description="Dual-specificity RNA methyltransferase RlmN">
    <location>
        <begin position="1"/>
        <end position="373"/>
    </location>
</feature>
<feature type="domain" description="Radical SAM core" evidence="2">
    <location>
        <begin position="100"/>
        <end position="339"/>
    </location>
</feature>
<feature type="active site" description="Proton acceptor" evidence="1">
    <location>
        <position position="94"/>
    </location>
</feature>
<feature type="active site" description="S-methylcysteine intermediate" evidence="1">
    <location>
        <position position="344"/>
    </location>
</feature>
<feature type="binding site" evidence="1">
    <location>
        <position position="114"/>
    </location>
    <ligand>
        <name>[4Fe-4S] cluster</name>
        <dbReference type="ChEBI" id="CHEBI:49883"/>
        <note>4Fe-4S-S-AdoMet</note>
    </ligand>
</feature>
<feature type="binding site" evidence="1">
    <location>
        <position position="118"/>
    </location>
    <ligand>
        <name>[4Fe-4S] cluster</name>
        <dbReference type="ChEBI" id="CHEBI:49883"/>
        <note>4Fe-4S-S-AdoMet</note>
    </ligand>
</feature>
<feature type="binding site" evidence="1">
    <location>
        <position position="121"/>
    </location>
    <ligand>
        <name>[4Fe-4S] cluster</name>
        <dbReference type="ChEBI" id="CHEBI:49883"/>
        <note>4Fe-4S-S-AdoMet</note>
    </ligand>
</feature>
<feature type="binding site" evidence="1">
    <location>
        <begin position="168"/>
        <end position="169"/>
    </location>
    <ligand>
        <name>S-adenosyl-L-methionine</name>
        <dbReference type="ChEBI" id="CHEBI:59789"/>
    </ligand>
</feature>
<feature type="binding site" evidence="1">
    <location>
        <position position="200"/>
    </location>
    <ligand>
        <name>S-adenosyl-L-methionine</name>
        <dbReference type="ChEBI" id="CHEBI:59789"/>
    </ligand>
</feature>
<feature type="binding site" evidence="1">
    <location>
        <begin position="222"/>
        <end position="224"/>
    </location>
    <ligand>
        <name>S-adenosyl-L-methionine</name>
        <dbReference type="ChEBI" id="CHEBI:59789"/>
    </ligand>
</feature>
<feature type="binding site" evidence="1">
    <location>
        <position position="301"/>
    </location>
    <ligand>
        <name>S-adenosyl-L-methionine</name>
        <dbReference type="ChEBI" id="CHEBI:59789"/>
    </ligand>
</feature>
<feature type="disulfide bond" description="(transient)" evidence="1">
    <location>
        <begin position="107"/>
        <end position="344"/>
    </location>
</feature>
<organism>
    <name type="scientific">Shewanella sp. (strain MR-7)</name>
    <dbReference type="NCBI Taxonomy" id="60481"/>
    <lineage>
        <taxon>Bacteria</taxon>
        <taxon>Pseudomonadati</taxon>
        <taxon>Pseudomonadota</taxon>
        <taxon>Gammaproteobacteria</taxon>
        <taxon>Alteromonadales</taxon>
        <taxon>Shewanellaceae</taxon>
        <taxon>Shewanella</taxon>
    </lineage>
</organism>
<accession>Q0HX60</accession>
<protein>
    <recommendedName>
        <fullName evidence="1">Dual-specificity RNA methyltransferase RlmN</fullName>
        <ecNumber evidence="1">2.1.1.192</ecNumber>
    </recommendedName>
    <alternativeName>
        <fullName evidence="1">23S rRNA (adenine(2503)-C(2))-methyltransferase</fullName>
    </alternativeName>
    <alternativeName>
        <fullName evidence="1">23S rRNA m2A2503 methyltransferase</fullName>
    </alternativeName>
    <alternativeName>
        <fullName evidence="1">Ribosomal RNA large subunit methyltransferase N</fullName>
    </alternativeName>
    <alternativeName>
        <fullName evidence="1">tRNA (adenine(37)-C(2))-methyltransferase</fullName>
    </alternativeName>
    <alternativeName>
        <fullName evidence="1">tRNA m2A37 methyltransferase</fullName>
    </alternativeName>
</protein>
<sequence>MSEKKINLLDLDRKAMRALFADLGEKPFRADQLMKWIYHFGVSDFEEMTNINKVLRQKLAARCEIVAPEISSYQKSTDGTIKFAIHVGEGQEVETVYIPEDDRATLCVSSQVGCALECTFCSTAQQGFNRNLTVSEIVGQIWRVSHFLGFAKDTGERPITNVVMMGMGEPLLNLANVIPAMDIMLDDFGFSLSKRRVTLSTSGVVPALDKLGDALDVALAVSIHAPNDELRDILVPVNKKYPLQEFLAGIRRYIAKSNANRGRVTVEYVMLDHINDSTEQAHELAQLMKDTPCKVNLIPFNPYPGSPYGRSSNSRIDRFSKVLMEYGLTVIVRKTRGDDIDAACGQLAGDIRDRTKRLAKKRMQENQISVTMN</sequence>